<feature type="initiator methionine" description="Removed" evidence="1">
    <location>
        <position position="1"/>
    </location>
</feature>
<feature type="chain" id="PRO_0000262892" description="tRNA-modifying protein YgfZ">
    <location>
        <begin position="2"/>
        <end position="326"/>
    </location>
</feature>
<feature type="binding site" evidence="2">
    <location>
        <position position="27"/>
    </location>
    <ligand>
        <name>folate</name>
        <dbReference type="ChEBI" id="CHEBI:62501"/>
    </ligand>
</feature>
<feature type="binding site" evidence="2">
    <location>
        <position position="189"/>
    </location>
    <ligand>
        <name>folate</name>
        <dbReference type="ChEBI" id="CHEBI:62501"/>
    </ligand>
</feature>
<sequence length="326" mass="36201">MAFTPFPPRQPTASARLPLTLMTLDDWALATITGADSEKYMQGQVTADVSQMTEDQHLLAAHCDAKGKMWSNLRLFRDGDGFAWIERRSVREPQLTELKKYAVFSKVTIAPDDERVLLGVAGFQARAALANLFSELPSREKQVVKEGATTLLWFEHPAERFLIVTDEATANMLTDKLRGEAELNNSQQWLALNIEAGFPVIDAANSGQFIPQATNLQALGGISFKKGCYTGQEMVARAKFRGANKRALWLLTGSASRLPEAGEDLELKMGENWRRTGTVLAAVKLEDGQVVVQVVMNNDMEPDSIFRVRDDANTLRIEPLPYSLEE</sequence>
<proteinExistence type="inferred from homology"/>
<reference key="1">
    <citation type="journal article" date="2006" name="Mol. Microbiol.">
        <title>Role of pathogenicity island-associated integrases in the genome plasticity of uropathogenic Escherichia coli strain 536.</title>
        <authorList>
            <person name="Hochhut B."/>
            <person name="Wilde C."/>
            <person name="Balling G."/>
            <person name="Middendorf B."/>
            <person name="Dobrindt U."/>
            <person name="Brzuszkiewicz E."/>
            <person name="Gottschalk G."/>
            <person name="Carniel E."/>
            <person name="Hacker J."/>
        </authorList>
    </citation>
    <scope>NUCLEOTIDE SEQUENCE [LARGE SCALE GENOMIC DNA]</scope>
    <source>
        <strain>536 / UPEC</strain>
    </source>
</reference>
<dbReference type="EMBL" id="CP000247">
    <property type="protein sequence ID" value="ABG70876.1"/>
    <property type="molecule type" value="Genomic_DNA"/>
</dbReference>
<dbReference type="RefSeq" id="WP_000886080.1">
    <property type="nucleotide sequence ID" value="NC_008253.1"/>
</dbReference>
<dbReference type="SMR" id="Q0TDV3"/>
<dbReference type="KEGG" id="ecp:ECP_2892"/>
<dbReference type="HOGENOM" id="CLU_007884_6_1_6"/>
<dbReference type="Proteomes" id="UP000009182">
    <property type="component" value="Chromosome"/>
</dbReference>
<dbReference type="GO" id="GO:0005737">
    <property type="term" value="C:cytoplasm"/>
    <property type="evidence" value="ECO:0007669"/>
    <property type="project" value="UniProtKB-SubCell"/>
</dbReference>
<dbReference type="GO" id="GO:0005542">
    <property type="term" value="F:folic acid binding"/>
    <property type="evidence" value="ECO:0007669"/>
    <property type="project" value="UniProtKB-UniRule"/>
</dbReference>
<dbReference type="GO" id="GO:0016226">
    <property type="term" value="P:iron-sulfur cluster assembly"/>
    <property type="evidence" value="ECO:0007669"/>
    <property type="project" value="TreeGrafter"/>
</dbReference>
<dbReference type="GO" id="GO:0009451">
    <property type="term" value="P:RNA modification"/>
    <property type="evidence" value="ECO:0007669"/>
    <property type="project" value="InterPro"/>
</dbReference>
<dbReference type="GO" id="GO:0008033">
    <property type="term" value="P:tRNA processing"/>
    <property type="evidence" value="ECO:0007669"/>
    <property type="project" value="UniProtKB-UniRule"/>
</dbReference>
<dbReference type="FunFam" id="2.40.30.160:FF:000001">
    <property type="entry name" value="tRNA-modifying protein YgfZ"/>
    <property type="match status" value="1"/>
</dbReference>
<dbReference type="FunFam" id="3.30.70.1400:FF:000002">
    <property type="entry name" value="tRNA-modifying protein YgfZ"/>
    <property type="match status" value="1"/>
</dbReference>
<dbReference type="FunFam" id="3.30.70.1630:FF:000001">
    <property type="entry name" value="tRNA-modifying protein YgfZ"/>
    <property type="match status" value="1"/>
</dbReference>
<dbReference type="Gene3D" id="2.40.30.160">
    <property type="match status" value="1"/>
</dbReference>
<dbReference type="Gene3D" id="3.30.70.1630">
    <property type="match status" value="1"/>
</dbReference>
<dbReference type="Gene3D" id="3.30.70.1400">
    <property type="entry name" value="Aminomethyltransferase beta-barrel domains"/>
    <property type="match status" value="1"/>
</dbReference>
<dbReference type="HAMAP" id="MF_01175">
    <property type="entry name" value="tRNA_modifying_YgfZ"/>
    <property type="match status" value="1"/>
</dbReference>
<dbReference type="InterPro" id="IPR006222">
    <property type="entry name" value="GCV_T_N"/>
</dbReference>
<dbReference type="InterPro" id="IPR029043">
    <property type="entry name" value="GcvT/YgfZ_C"/>
</dbReference>
<dbReference type="InterPro" id="IPR023758">
    <property type="entry name" value="tRNA-modifying_YgfZ"/>
</dbReference>
<dbReference type="InterPro" id="IPR045179">
    <property type="entry name" value="YgfZ/GcvT"/>
</dbReference>
<dbReference type="InterPro" id="IPR017703">
    <property type="entry name" value="YgfZ/GcvT_CS"/>
</dbReference>
<dbReference type="InterPro" id="IPR048451">
    <property type="entry name" value="YgfZ_barrel"/>
</dbReference>
<dbReference type="NCBIfam" id="NF007110">
    <property type="entry name" value="PRK09559.1"/>
    <property type="match status" value="1"/>
</dbReference>
<dbReference type="NCBIfam" id="TIGR03317">
    <property type="entry name" value="ygfZ_signature"/>
    <property type="match status" value="1"/>
</dbReference>
<dbReference type="PANTHER" id="PTHR22602">
    <property type="entry name" value="TRANSFERASE CAF17, MITOCHONDRIAL-RELATED"/>
    <property type="match status" value="1"/>
</dbReference>
<dbReference type="PANTHER" id="PTHR22602:SF0">
    <property type="entry name" value="TRANSFERASE CAF17, MITOCHONDRIAL-RELATED"/>
    <property type="match status" value="1"/>
</dbReference>
<dbReference type="Pfam" id="PF01571">
    <property type="entry name" value="GCV_T"/>
    <property type="match status" value="1"/>
</dbReference>
<dbReference type="Pfam" id="PF21130">
    <property type="entry name" value="YgfZ_barrel"/>
    <property type="match status" value="1"/>
</dbReference>
<dbReference type="SUPFAM" id="SSF101790">
    <property type="entry name" value="Aminomethyltransferase beta-barrel domain"/>
    <property type="match status" value="1"/>
</dbReference>
<dbReference type="SUPFAM" id="SSF103025">
    <property type="entry name" value="Folate-binding domain"/>
    <property type="match status" value="1"/>
</dbReference>
<name>YGFZ_ECOL5</name>
<comment type="function">
    <text evidence="2">Folate-binding protein involved in regulating the level of ATP-DnaA and in the modification of some tRNAs. It is probably a key factor in regulatory networks that act via tRNA modification, such as initiation of chromosomal replication.</text>
</comment>
<comment type="subcellular location">
    <subcellularLocation>
        <location evidence="2">Cytoplasm</location>
    </subcellularLocation>
</comment>
<comment type="similarity">
    <text evidence="2">Belongs to the tRNA-modifying YgfZ family.</text>
</comment>
<protein>
    <recommendedName>
        <fullName evidence="2">tRNA-modifying protein YgfZ</fullName>
    </recommendedName>
</protein>
<gene>
    <name evidence="2" type="primary">ygfZ</name>
    <name type="ordered locus">ECP_2892</name>
</gene>
<keyword id="KW-0963">Cytoplasm</keyword>
<keyword id="KW-0290">Folate-binding</keyword>
<keyword id="KW-0819">tRNA processing</keyword>
<accession>Q0TDV3</accession>
<evidence type="ECO:0000250" key="1"/>
<evidence type="ECO:0000255" key="2">
    <source>
        <dbReference type="HAMAP-Rule" id="MF_01175"/>
    </source>
</evidence>
<organism>
    <name type="scientific">Escherichia coli O6:K15:H31 (strain 536 / UPEC)</name>
    <dbReference type="NCBI Taxonomy" id="362663"/>
    <lineage>
        <taxon>Bacteria</taxon>
        <taxon>Pseudomonadati</taxon>
        <taxon>Pseudomonadota</taxon>
        <taxon>Gammaproteobacteria</taxon>
        <taxon>Enterobacterales</taxon>
        <taxon>Enterobacteriaceae</taxon>
        <taxon>Escherichia</taxon>
    </lineage>
</organism>